<protein>
    <recommendedName>
        <fullName evidence="1">Phosphoenolpyruvate carboxykinase (ATP)</fullName>
        <shortName evidence="1">PCK</shortName>
        <shortName evidence="1">PEP carboxykinase</shortName>
        <shortName evidence="1">PEPCK</shortName>
        <ecNumber evidence="1">4.1.1.49</ecNumber>
    </recommendedName>
</protein>
<reference key="1">
    <citation type="journal article" date="2009" name="J. Bacteriol.">
        <title>Complete genome sequence of Haemophilus parasuis SH0165.</title>
        <authorList>
            <person name="Yue M."/>
            <person name="Yang F."/>
            <person name="Yang J."/>
            <person name="Bei W."/>
            <person name="Cai X."/>
            <person name="Chen L."/>
            <person name="Dong J."/>
            <person name="Zhou R."/>
            <person name="Jin M."/>
            <person name="Jin Q."/>
            <person name="Chen H."/>
        </authorList>
    </citation>
    <scope>NUCLEOTIDE SEQUENCE [LARGE SCALE GENOMIC DNA]</scope>
    <source>
        <strain>SH0165</strain>
    </source>
</reference>
<gene>
    <name evidence="1" type="primary">pckA</name>
    <name type="ordered locus">HAPS_0717</name>
</gene>
<organism>
    <name type="scientific">Glaesserella parasuis serovar 5 (strain SH0165)</name>
    <name type="common">Haemophilus parasuis</name>
    <dbReference type="NCBI Taxonomy" id="557723"/>
    <lineage>
        <taxon>Bacteria</taxon>
        <taxon>Pseudomonadati</taxon>
        <taxon>Pseudomonadota</taxon>
        <taxon>Gammaproteobacteria</taxon>
        <taxon>Pasteurellales</taxon>
        <taxon>Pasteurellaceae</taxon>
        <taxon>Glaesserella</taxon>
    </lineage>
</organism>
<feature type="chain" id="PRO_1000192318" description="Phosphoenolpyruvate carboxykinase (ATP)">
    <location>
        <begin position="1"/>
        <end position="536"/>
    </location>
</feature>
<feature type="binding site" evidence="1">
    <location>
        <position position="62"/>
    </location>
    <ligand>
        <name>substrate</name>
    </ligand>
</feature>
<feature type="binding site" evidence="1">
    <location>
        <position position="203"/>
    </location>
    <ligand>
        <name>substrate</name>
    </ligand>
</feature>
<feature type="binding site" evidence="1">
    <location>
        <position position="209"/>
    </location>
    <ligand>
        <name>ATP</name>
        <dbReference type="ChEBI" id="CHEBI:30616"/>
    </ligand>
</feature>
<feature type="binding site" evidence="1">
    <location>
        <position position="209"/>
    </location>
    <ligand>
        <name>Mn(2+)</name>
        <dbReference type="ChEBI" id="CHEBI:29035"/>
    </ligand>
</feature>
<feature type="binding site" evidence="1">
    <location>
        <position position="209"/>
    </location>
    <ligand>
        <name>substrate</name>
    </ligand>
</feature>
<feature type="binding site" evidence="1">
    <location>
        <position position="228"/>
    </location>
    <ligand>
        <name>ATP</name>
        <dbReference type="ChEBI" id="CHEBI:30616"/>
    </ligand>
</feature>
<feature type="binding site" evidence="1">
    <location>
        <position position="228"/>
    </location>
    <ligand>
        <name>Mn(2+)</name>
        <dbReference type="ChEBI" id="CHEBI:29035"/>
    </ligand>
</feature>
<feature type="binding site" evidence="1">
    <location>
        <begin position="244"/>
        <end position="252"/>
    </location>
    <ligand>
        <name>ATP</name>
        <dbReference type="ChEBI" id="CHEBI:30616"/>
    </ligand>
</feature>
<feature type="binding site" evidence="1">
    <location>
        <position position="265"/>
    </location>
    <ligand>
        <name>Mn(2+)</name>
        <dbReference type="ChEBI" id="CHEBI:29035"/>
    </ligand>
</feature>
<feature type="binding site" evidence="1">
    <location>
        <position position="293"/>
    </location>
    <ligand>
        <name>ATP</name>
        <dbReference type="ChEBI" id="CHEBI:30616"/>
    </ligand>
</feature>
<feature type="binding site" evidence="1">
    <location>
        <position position="329"/>
    </location>
    <ligand>
        <name>ATP</name>
        <dbReference type="ChEBI" id="CHEBI:30616"/>
    </ligand>
</feature>
<feature type="binding site" evidence="1">
    <location>
        <position position="329"/>
    </location>
    <ligand>
        <name>substrate</name>
    </ligand>
</feature>
<feature type="binding site" evidence="1">
    <location>
        <begin position="445"/>
        <end position="446"/>
    </location>
    <ligand>
        <name>ATP</name>
        <dbReference type="ChEBI" id="CHEBI:30616"/>
    </ligand>
</feature>
<feature type="binding site" evidence="1">
    <location>
        <position position="451"/>
    </location>
    <ligand>
        <name>ATP</name>
        <dbReference type="ChEBI" id="CHEBI:30616"/>
    </ligand>
</feature>
<accession>B8F4W1</accession>
<sequence>MLNRVEQELALLGITNVKEIVYNPSYEQLFEEEMKPELEGFEKGRLTTSGAVAVDTGIFTGRSPKDKFIVLDENTKDTVWWTSDEVKNDNKPMSQSTWQSIKELVTNQLSNKRLFVIDAFCGANKDSRVAVRIVTEVAWQAHFVKNMFIRPSEAELANFTPDFVVMNGSKVTNPNWKEQGLNSENFVAFNITEKIQLIGGTWYGGEMKKGLFSLMNYWLPLKGIASMHCSANVGEDGDVAVFFGLSGTGKTTLSTDPKRKLIGDDEHGWDDDGVFNYEGGCYAKTINLSEENEPDIYRAIKRDALLENVVVREDGSIDFADGSKTENTRVSYPIYHIDNIVEPVSKAGHATKVIFLTADAFGVLPPVSKLTPEQTKYYFLSGFTAKLAGTERGVTEPTPTFSACFGKAFLSLHPTQYAEVLVKRMEASGAEAYLVNTGWNGTGKRISIKDTRGIIDAILDGSIEKAEMGSLPIFNLAIPKALPGVDPAILDPRDTYADKAQWQAKAEDLAGRFVKNFEQYATNDEGKALIAAGPKL</sequence>
<dbReference type="EC" id="4.1.1.49" evidence="1"/>
<dbReference type="EMBL" id="CP001321">
    <property type="protein sequence ID" value="ACL32363.1"/>
    <property type="molecule type" value="Genomic_DNA"/>
</dbReference>
<dbReference type="RefSeq" id="WP_012621880.1">
    <property type="nucleotide sequence ID" value="NC_011852.1"/>
</dbReference>
<dbReference type="SMR" id="B8F4W1"/>
<dbReference type="STRING" id="557723.HAPS_0717"/>
<dbReference type="GeneID" id="66619281"/>
<dbReference type="KEGG" id="hap:HAPS_0717"/>
<dbReference type="HOGENOM" id="CLU_018247_0_1_6"/>
<dbReference type="UniPathway" id="UPA00138"/>
<dbReference type="Proteomes" id="UP000006743">
    <property type="component" value="Chromosome"/>
</dbReference>
<dbReference type="GO" id="GO:0005829">
    <property type="term" value="C:cytosol"/>
    <property type="evidence" value="ECO:0007669"/>
    <property type="project" value="TreeGrafter"/>
</dbReference>
<dbReference type="GO" id="GO:0005524">
    <property type="term" value="F:ATP binding"/>
    <property type="evidence" value="ECO:0007669"/>
    <property type="project" value="UniProtKB-UniRule"/>
</dbReference>
<dbReference type="GO" id="GO:0046872">
    <property type="term" value="F:metal ion binding"/>
    <property type="evidence" value="ECO:0007669"/>
    <property type="project" value="UniProtKB-KW"/>
</dbReference>
<dbReference type="GO" id="GO:0004612">
    <property type="term" value="F:phosphoenolpyruvate carboxykinase (ATP) activity"/>
    <property type="evidence" value="ECO:0007669"/>
    <property type="project" value="UniProtKB-UniRule"/>
</dbReference>
<dbReference type="GO" id="GO:0006094">
    <property type="term" value="P:gluconeogenesis"/>
    <property type="evidence" value="ECO:0007669"/>
    <property type="project" value="UniProtKB-UniRule"/>
</dbReference>
<dbReference type="CDD" id="cd00484">
    <property type="entry name" value="PEPCK_ATP"/>
    <property type="match status" value="1"/>
</dbReference>
<dbReference type="FunFam" id="2.170.8.10:FF:000001">
    <property type="entry name" value="Phosphoenolpyruvate carboxykinase (ATP)"/>
    <property type="match status" value="1"/>
</dbReference>
<dbReference type="FunFam" id="3.40.449.10:FF:000001">
    <property type="entry name" value="Phosphoenolpyruvate carboxykinase (ATP)"/>
    <property type="match status" value="1"/>
</dbReference>
<dbReference type="Gene3D" id="3.90.228.20">
    <property type="match status" value="1"/>
</dbReference>
<dbReference type="Gene3D" id="3.40.449.10">
    <property type="entry name" value="Phosphoenolpyruvate Carboxykinase, domain 1"/>
    <property type="match status" value="1"/>
</dbReference>
<dbReference type="Gene3D" id="2.170.8.10">
    <property type="entry name" value="Phosphoenolpyruvate Carboxykinase, domain 2"/>
    <property type="match status" value="1"/>
</dbReference>
<dbReference type="HAMAP" id="MF_00453">
    <property type="entry name" value="PEPCK_ATP"/>
    <property type="match status" value="1"/>
</dbReference>
<dbReference type="InterPro" id="IPR001272">
    <property type="entry name" value="PEP_carboxykinase_ATP"/>
</dbReference>
<dbReference type="InterPro" id="IPR013035">
    <property type="entry name" value="PEP_carboxykinase_C"/>
</dbReference>
<dbReference type="InterPro" id="IPR008210">
    <property type="entry name" value="PEP_carboxykinase_N"/>
</dbReference>
<dbReference type="InterPro" id="IPR015994">
    <property type="entry name" value="PEPCK_ATP_CS"/>
</dbReference>
<dbReference type="NCBIfam" id="TIGR00224">
    <property type="entry name" value="pckA"/>
    <property type="match status" value="1"/>
</dbReference>
<dbReference type="NCBIfam" id="NF006819">
    <property type="entry name" value="PRK09344.1-1"/>
    <property type="match status" value="1"/>
</dbReference>
<dbReference type="NCBIfam" id="NF006820">
    <property type="entry name" value="PRK09344.1-2"/>
    <property type="match status" value="1"/>
</dbReference>
<dbReference type="NCBIfam" id="NF006821">
    <property type="entry name" value="PRK09344.1-3"/>
    <property type="match status" value="1"/>
</dbReference>
<dbReference type="PANTHER" id="PTHR30031:SF0">
    <property type="entry name" value="PHOSPHOENOLPYRUVATE CARBOXYKINASE (ATP)"/>
    <property type="match status" value="1"/>
</dbReference>
<dbReference type="PANTHER" id="PTHR30031">
    <property type="entry name" value="PHOSPHOENOLPYRUVATE CARBOXYKINASE ATP"/>
    <property type="match status" value="1"/>
</dbReference>
<dbReference type="Pfam" id="PF01293">
    <property type="entry name" value="PEPCK_ATP"/>
    <property type="match status" value="1"/>
</dbReference>
<dbReference type="PIRSF" id="PIRSF006294">
    <property type="entry name" value="PEP_crbxkin"/>
    <property type="match status" value="1"/>
</dbReference>
<dbReference type="SUPFAM" id="SSF68923">
    <property type="entry name" value="PEP carboxykinase N-terminal domain"/>
    <property type="match status" value="1"/>
</dbReference>
<dbReference type="SUPFAM" id="SSF53795">
    <property type="entry name" value="PEP carboxykinase-like"/>
    <property type="match status" value="1"/>
</dbReference>
<dbReference type="PROSITE" id="PS00532">
    <property type="entry name" value="PEPCK_ATP"/>
    <property type="match status" value="1"/>
</dbReference>
<keyword id="KW-0067">ATP-binding</keyword>
<keyword id="KW-0963">Cytoplasm</keyword>
<keyword id="KW-0210">Decarboxylase</keyword>
<keyword id="KW-0312">Gluconeogenesis</keyword>
<keyword id="KW-0456">Lyase</keyword>
<keyword id="KW-0464">Manganese</keyword>
<keyword id="KW-0479">Metal-binding</keyword>
<keyword id="KW-0547">Nucleotide-binding</keyword>
<keyword id="KW-1185">Reference proteome</keyword>
<name>PCKA_GLAP5</name>
<proteinExistence type="inferred from homology"/>
<evidence type="ECO:0000255" key="1">
    <source>
        <dbReference type="HAMAP-Rule" id="MF_00453"/>
    </source>
</evidence>
<comment type="function">
    <text evidence="1">Involved in the gluconeogenesis. Catalyzes the conversion of oxaloacetate (OAA) to phosphoenolpyruvate (PEP) through direct phosphoryl transfer between the nucleoside triphosphate and OAA.</text>
</comment>
<comment type="catalytic activity">
    <reaction evidence="1">
        <text>oxaloacetate + ATP = phosphoenolpyruvate + ADP + CO2</text>
        <dbReference type="Rhea" id="RHEA:18617"/>
        <dbReference type="ChEBI" id="CHEBI:16452"/>
        <dbReference type="ChEBI" id="CHEBI:16526"/>
        <dbReference type="ChEBI" id="CHEBI:30616"/>
        <dbReference type="ChEBI" id="CHEBI:58702"/>
        <dbReference type="ChEBI" id="CHEBI:456216"/>
        <dbReference type="EC" id="4.1.1.49"/>
    </reaction>
</comment>
<comment type="cofactor">
    <cofactor evidence="1">
        <name>Mn(2+)</name>
        <dbReference type="ChEBI" id="CHEBI:29035"/>
    </cofactor>
    <text evidence="1">Binds 1 Mn(2+) ion per subunit.</text>
</comment>
<comment type="pathway">
    <text evidence="1">Carbohydrate biosynthesis; gluconeogenesis.</text>
</comment>
<comment type="subunit">
    <text evidence="1">Monomer.</text>
</comment>
<comment type="subcellular location">
    <subcellularLocation>
        <location evidence="1">Cytoplasm</location>
    </subcellularLocation>
</comment>
<comment type="similarity">
    <text evidence="1">Belongs to the phosphoenolpyruvate carboxykinase (ATP) family.</text>
</comment>